<keyword id="KW-0255">Endonuclease</keyword>
<keyword id="KW-0378">Hydrolase</keyword>
<keyword id="KW-0540">Nuclease</keyword>
<keyword id="KW-1185">Reference proteome</keyword>
<keyword id="KW-0694">RNA-binding</keyword>
<keyword id="KW-0699">rRNA-binding</keyword>
<accession>Q9KQ82</accession>
<organism>
    <name type="scientific">Vibrio cholerae serotype O1 (strain ATCC 39315 / El Tor Inaba N16961)</name>
    <dbReference type="NCBI Taxonomy" id="243277"/>
    <lineage>
        <taxon>Bacteria</taxon>
        <taxon>Pseudomonadati</taxon>
        <taxon>Pseudomonadota</taxon>
        <taxon>Gammaproteobacteria</taxon>
        <taxon>Vibrionales</taxon>
        <taxon>Vibrionaceae</taxon>
        <taxon>Vibrio</taxon>
    </lineage>
</organism>
<feature type="chain" id="PRO_0000214563" description="Ribosome rescue factor SmrB">
    <location>
        <begin position="1"/>
        <end position="186"/>
    </location>
</feature>
<feature type="domain" description="Smr" evidence="1">
    <location>
        <begin position="107"/>
        <end position="182"/>
    </location>
</feature>
<feature type="region of interest" description="Disordered" evidence="2">
    <location>
        <begin position="1"/>
        <end position="20"/>
    </location>
</feature>
<feature type="region of interest" description="Disordered" evidence="2">
    <location>
        <begin position="41"/>
        <end position="60"/>
    </location>
</feature>
<feature type="compositionally biased region" description="Basic and acidic residues" evidence="2">
    <location>
        <begin position="1"/>
        <end position="16"/>
    </location>
</feature>
<feature type="compositionally biased region" description="Basic and acidic residues" evidence="2">
    <location>
        <begin position="49"/>
        <end position="60"/>
    </location>
</feature>
<dbReference type="EC" id="3.1.-.-" evidence="1"/>
<dbReference type="EMBL" id="AE003852">
    <property type="protein sequence ID" value="AAF95264.1"/>
    <property type="molecule type" value="Genomic_DNA"/>
</dbReference>
<dbReference type="PIR" id="A82116">
    <property type="entry name" value="A82116"/>
</dbReference>
<dbReference type="RefSeq" id="NP_231750.1">
    <property type="nucleotide sequence ID" value="NC_002505.1"/>
</dbReference>
<dbReference type="RefSeq" id="WP_000041521.1">
    <property type="nucleotide sequence ID" value="NZ_LT906614.1"/>
</dbReference>
<dbReference type="SMR" id="Q9KQ82"/>
<dbReference type="STRING" id="243277.VC_2119"/>
<dbReference type="DNASU" id="2613375"/>
<dbReference type="EnsemblBacteria" id="AAF95264">
    <property type="protein sequence ID" value="AAF95264"/>
    <property type="gene ID" value="VC_2119"/>
</dbReference>
<dbReference type="KEGG" id="vch:VC_2119"/>
<dbReference type="PATRIC" id="fig|243277.26.peg.2024"/>
<dbReference type="eggNOG" id="COG2840">
    <property type="taxonomic scope" value="Bacteria"/>
</dbReference>
<dbReference type="HOGENOM" id="CLU_055978_4_0_6"/>
<dbReference type="Proteomes" id="UP000000584">
    <property type="component" value="Chromosome 1"/>
</dbReference>
<dbReference type="GO" id="GO:0004521">
    <property type="term" value="F:RNA endonuclease activity"/>
    <property type="evidence" value="ECO:0007669"/>
    <property type="project" value="UniProtKB-UniRule"/>
</dbReference>
<dbReference type="GO" id="GO:0019843">
    <property type="term" value="F:rRNA binding"/>
    <property type="evidence" value="ECO:0007669"/>
    <property type="project" value="UniProtKB-UniRule"/>
</dbReference>
<dbReference type="GO" id="GO:0072344">
    <property type="term" value="P:rescue of stalled ribosome"/>
    <property type="evidence" value="ECO:0007669"/>
    <property type="project" value="UniProtKB-UniRule"/>
</dbReference>
<dbReference type="Gene3D" id="3.30.1370.110">
    <property type="match status" value="1"/>
</dbReference>
<dbReference type="HAMAP" id="MF_01042">
    <property type="entry name" value="SmrB"/>
    <property type="match status" value="1"/>
</dbReference>
<dbReference type="InterPro" id="IPR002625">
    <property type="entry name" value="Smr_dom"/>
</dbReference>
<dbReference type="InterPro" id="IPR036063">
    <property type="entry name" value="Smr_dom_sf"/>
</dbReference>
<dbReference type="InterPro" id="IPR022990">
    <property type="entry name" value="SmrB-like"/>
</dbReference>
<dbReference type="NCBIfam" id="NF003432">
    <property type="entry name" value="PRK04946.1"/>
    <property type="match status" value="1"/>
</dbReference>
<dbReference type="PANTHER" id="PTHR35562">
    <property type="entry name" value="DNA ENDONUCLEASE SMRA-RELATED"/>
    <property type="match status" value="1"/>
</dbReference>
<dbReference type="PANTHER" id="PTHR35562:SF1">
    <property type="entry name" value="UPF0115 PROTEIN YFCN"/>
    <property type="match status" value="1"/>
</dbReference>
<dbReference type="Pfam" id="PF01713">
    <property type="entry name" value="Smr"/>
    <property type="match status" value="1"/>
</dbReference>
<dbReference type="SMART" id="SM00463">
    <property type="entry name" value="SMR"/>
    <property type="match status" value="1"/>
</dbReference>
<dbReference type="SUPFAM" id="SSF160443">
    <property type="entry name" value="SMR domain-like"/>
    <property type="match status" value="1"/>
</dbReference>
<dbReference type="PROSITE" id="PS50828">
    <property type="entry name" value="SMR"/>
    <property type="match status" value="1"/>
</dbReference>
<name>SMRB_VIBCH</name>
<evidence type="ECO:0000255" key="1">
    <source>
        <dbReference type="HAMAP-Rule" id="MF_01042"/>
    </source>
</evidence>
<evidence type="ECO:0000256" key="2">
    <source>
        <dbReference type="SAM" id="MobiDB-lite"/>
    </source>
</evidence>
<gene>
    <name evidence="1" type="primary">smrB</name>
    <name type="ordered locus">VC_2119</name>
</gene>
<protein>
    <recommendedName>
        <fullName evidence="1">Ribosome rescue factor SmrB</fullName>
        <ecNumber evidence="1">3.1.-.-</ecNumber>
    </recommendedName>
</protein>
<comment type="function">
    <text evidence="1">Acts as a ribosome collision sensor. Detects stalled/collided disomes (pairs of ribosomes where the leading ribosome is stalled and a second ribosome has collided with it) and endonucleolytically cleaves mRNA at the 5' boundary of the stalled ribosome. Stalled/collided disomes form a new interface (primarily via the 30S subunits) that binds SmrB. Cleaved mRNA becomes available for tmRNA ligation, leading to ribosomal subunit dissociation and rescue of stalled ribosomes.</text>
</comment>
<comment type="subunit">
    <text evidence="1">Associates with collided ribosomes, but not with correctly translating polysomes.</text>
</comment>
<comment type="similarity">
    <text evidence="1">Belongs to the SmrB family.</text>
</comment>
<sequence length="186" mass="21479">MSKNDHRITHNKSDKDNLDDDFSLFRDEVKGVKKLRQDTILHAPNRNPKQKEIRRTEREASDNDFYFSDEFMPHLTDEGPTRYARSDVSKYEVKRLRRGVYVPDVFLDMHGMTQQEAKRELGAMIAYCLKENVHCACVQHGIGKHILKQNVPLWLAQHPDVLAFHQAPLEFGGDGALLVLLSIPEK</sequence>
<reference key="1">
    <citation type="journal article" date="2000" name="Nature">
        <title>DNA sequence of both chromosomes of the cholera pathogen Vibrio cholerae.</title>
        <authorList>
            <person name="Heidelberg J.F."/>
            <person name="Eisen J.A."/>
            <person name="Nelson W.C."/>
            <person name="Clayton R.A."/>
            <person name="Gwinn M.L."/>
            <person name="Dodson R.J."/>
            <person name="Haft D.H."/>
            <person name="Hickey E.K."/>
            <person name="Peterson J.D."/>
            <person name="Umayam L.A."/>
            <person name="Gill S.R."/>
            <person name="Nelson K.E."/>
            <person name="Read T.D."/>
            <person name="Tettelin H."/>
            <person name="Richardson D.L."/>
            <person name="Ermolaeva M.D."/>
            <person name="Vamathevan J.J."/>
            <person name="Bass S."/>
            <person name="Qin H."/>
            <person name="Dragoi I."/>
            <person name="Sellers P."/>
            <person name="McDonald L.A."/>
            <person name="Utterback T.R."/>
            <person name="Fleischmann R.D."/>
            <person name="Nierman W.C."/>
            <person name="White O."/>
            <person name="Salzberg S.L."/>
            <person name="Smith H.O."/>
            <person name="Colwell R.R."/>
            <person name="Mekalanos J.J."/>
            <person name="Venter J.C."/>
            <person name="Fraser C.M."/>
        </authorList>
    </citation>
    <scope>NUCLEOTIDE SEQUENCE [LARGE SCALE GENOMIC DNA]</scope>
    <source>
        <strain>ATCC 39315 / El Tor Inaba N16961</strain>
    </source>
</reference>
<proteinExistence type="inferred from homology"/>